<comment type="function">
    <text evidence="1">Catalyzes the reversible isomerization of glucose-6-phosphate to fructose-6-phosphate.</text>
</comment>
<comment type="catalytic activity">
    <reaction evidence="1">
        <text>alpha-D-glucose 6-phosphate = beta-D-fructose 6-phosphate</text>
        <dbReference type="Rhea" id="RHEA:11816"/>
        <dbReference type="ChEBI" id="CHEBI:57634"/>
        <dbReference type="ChEBI" id="CHEBI:58225"/>
        <dbReference type="EC" id="5.3.1.9"/>
    </reaction>
</comment>
<comment type="pathway">
    <text evidence="1">Carbohydrate biosynthesis; gluconeogenesis.</text>
</comment>
<comment type="pathway">
    <text evidence="1">Carbohydrate degradation; glycolysis; D-glyceraldehyde 3-phosphate and glycerone phosphate from D-glucose: step 2/4.</text>
</comment>
<comment type="subcellular location">
    <subcellularLocation>
        <location evidence="1">Cytoplasm</location>
    </subcellularLocation>
</comment>
<comment type="similarity">
    <text evidence="1">Belongs to the GPI family.</text>
</comment>
<evidence type="ECO:0000255" key="1">
    <source>
        <dbReference type="HAMAP-Rule" id="MF_00473"/>
    </source>
</evidence>
<reference key="1">
    <citation type="journal article" date="2004" name="Nat. Genet.">
        <title>Evidence in the Legionella pneumophila genome for exploitation of host cell functions and high genome plasticity.</title>
        <authorList>
            <person name="Cazalet C."/>
            <person name="Rusniok C."/>
            <person name="Brueggemann H."/>
            <person name="Zidane N."/>
            <person name="Magnier A."/>
            <person name="Ma L."/>
            <person name="Tichit M."/>
            <person name="Jarraud S."/>
            <person name="Bouchier C."/>
            <person name="Vandenesch F."/>
            <person name="Kunst F."/>
            <person name="Etienne J."/>
            <person name="Glaser P."/>
            <person name="Buchrieser C."/>
        </authorList>
    </citation>
    <scope>NUCLEOTIDE SEQUENCE [LARGE SCALE GENOMIC DNA]</scope>
    <source>
        <strain>Paris</strain>
    </source>
</reference>
<gene>
    <name evidence="1" type="primary">pgi</name>
    <name type="ordered locus">lpp0825</name>
</gene>
<feature type="chain" id="PRO_0000180663" description="Glucose-6-phosphate isomerase">
    <location>
        <begin position="1"/>
        <end position="499"/>
    </location>
</feature>
<feature type="active site" description="Proton donor" evidence="1">
    <location>
        <position position="352"/>
    </location>
</feature>
<feature type="active site" evidence="1">
    <location>
        <position position="383"/>
    </location>
</feature>
<feature type="active site" evidence="1">
    <location>
        <position position="487"/>
    </location>
</feature>
<accession>Q5X6Y8</accession>
<name>G6PI_LEGPA</name>
<sequence>MIRNSMKSHTELLSWNLLQKEADRVRLNSDSLTCVVPDSNNYESSKQINCIEYDYSRQRVNRTIIDLLIDLANEVKLQEKIDNLINGKKINISENRPALHTALRDLGNKSIMIDGLDIMSAVINTREKIKVISNQIREKKWLGHSGLPITDIVNIGIGGSDLGPRVCINALSNYISKEFNYHFISDVDPASFNDVIAKINPQTTLFIVSSKSFTTKETLLNARKAFALYEDTASIDQHFIAVTAHPERAYQMGIKTVLPIWDWVGGRFSFCSAVNLITAIAIGYEQFVELLAGAHDVDTHVQFTDFKNNIPVLMALIGIWNNNFLNIHNLLILTYSKKLEYFVPYVQQLDMESNGKSIDVNGSMVDYATGPIVWGGLGNQAQHSYFQLLCQGTHRCVGDFITLKTNDEHEINSMCHYKMKVLSEGIQTIENPYGYIPGNMPMNHLILSDCSPYTLGALVALYEHKIFVQSVIWNINPFDQPGIESAKSAHREITLSSES</sequence>
<dbReference type="EC" id="5.3.1.9" evidence="1"/>
<dbReference type="EMBL" id="CR628336">
    <property type="protein sequence ID" value="CAH11973.1"/>
    <property type="molecule type" value="Genomic_DNA"/>
</dbReference>
<dbReference type="SMR" id="Q5X6Y8"/>
<dbReference type="KEGG" id="lpp:lpp0825"/>
<dbReference type="LegioList" id="lpp0825"/>
<dbReference type="HOGENOM" id="CLU_017947_3_1_6"/>
<dbReference type="UniPathway" id="UPA00109">
    <property type="reaction ID" value="UER00181"/>
</dbReference>
<dbReference type="UniPathway" id="UPA00138"/>
<dbReference type="GO" id="GO:0005829">
    <property type="term" value="C:cytosol"/>
    <property type="evidence" value="ECO:0007669"/>
    <property type="project" value="TreeGrafter"/>
</dbReference>
<dbReference type="GO" id="GO:0097367">
    <property type="term" value="F:carbohydrate derivative binding"/>
    <property type="evidence" value="ECO:0007669"/>
    <property type="project" value="InterPro"/>
</dbReference>
<dbReference type="GO" id="GO:0004347">
    <property type="term" value="F:glucose-6-phosphate isomerase activity"/>
    <property type="evidence" value="ECO:0007669"/>
    <property type="project" value="UniProtKB-UniRule"/>
</dbReference>
<dbReference type="GO" id="GO:0048029">
    <property type="term" value="F:monosaccharide binding"/>
    <property type="evidence" value="ECO:0007669"/>
    <property type="project" value="TreeGrafter"/>
</dbReference>
<dbReference type="GO" id="GO:0006094">
    <property type="term" value="P:gluconeogenesis"/>
    <property type="evidence" value="ECO:0007669"/>
    <property type="project" value="UniProtKB-UniRule"/>
</dbReference>
<dbReference type="GO" id="GO:0051156">
    <property type="term" value="P:glucose 6-phosphate metabolic process"/>
    <property type="evidence" value="ECO:0007669"/>
    <property type="project" value="TreeGrafter"/>
</dbReference>
<dbReference type="GO" id="GO:0006096">
    <property type="term" value="P:glycolytic process"/>
    <property type="evidence" value="ECO:0007669"/>
    <property type="project" value="UniProtKB-UniRule"/>
</dbReference>
<dbReference type="CDD" id="cd05015">
    <property type="entry name" value="SIS_PGI_1"/>
    <property type="match status" value="1"/>
</dbReference>
<dbReference type="CDD" id="cd05016">
    <property type="entry name" value="SIS_PGI_2"/>
    <property type="match status" value="1"/>
</dbReference>
<dbReference type="Gene3D" id="3.40.50.10490">
    <property type="entry name" value="Glucose-6-phosphate isomerase like protein, domain 1"/>
    <property type="match status" value="2"/>
</dbReference>
<dbReference type="HAMAP" id="MF_00473">
    <property type="entry name" value="G6P_isomerase"/>
    <property type="match status" value="1"/>
</dbReference>
<dbReference type="InterPro" id="IPR001672">
    <property type="entry name" value="G6P_Isomerase"/>
</dbReference>
<dbReference type="InterPro" id="IPR018189">
    <property type="entry name" value="Phosphoglucose_isomerase_CS"/>
</dbReference>
<dbReference type="InterPro" id="IPR046348">
    <property type="entry name" value="SIS_dom_sf"/>
</dbReference>
<dbReference type="InterPro" id="IPR035476">
    <property type="entry name" value="SIS_PGI_1"/>
</dbReference>
<dbReference type="InterPro" id="IPR035482">
    <property type="entry name" value="SIS_PGI_2"/>
</dbReference>
<dbReference type="NCBIfam" id="NF001211">
    <property type="entry name" value="PRK00179.1"/>
    <property type="match status" value="1"/>
</dbReference>
<dbReference type="PANTHER" id="PTHR11469">
    <property type="entry name" value="GLUCOSE-6-PHOSPHATE ISOMERASE"/>
    <property type="match status" value="1"/>
</dbReference>
<dbReference type="PANTHER" id="PTHR11469:SF1">
    <property type="entry name" value="GLUCOSE-6-PHOSPHATE ISOMERASE"/>
    <property type="match status" value="1"/>
</dbReference>
<dbReference type="Pfam" id="PF00342">
    <property type="entry name" value="PGI"/>
    <property type="match status" value="1"/>
</dbReference>
<dbReference type="PRINTS" id="PR00662">
    <property type="entry name" value="G6PISOMERASE"/>
</dbReference>
<dbReference type="SUPFAM" id="SSF53697">
    <property type="entry name" value="SIS domain"/>
    <property type="match status" value="1"/>
</dbReference>
<dbReference type="PROSITE" id="PS00765">
    <property type="entry name" value="P_GLUCOSE_ISOMERASE_1"/>
    <property type="match status" value="1"/>
</dbReference>
<dbReference type="PROSITE" id="PS00174">
    <property type="entry name" value="P_GLUCOSE_ISOMERASE_2"/>
    <property type="match status" value="1"/>
</dbReference>
<dbReference type="PROSITE" id="PS51463">
    <property type="entry name" value="P_GLUCOSE_ISOMERASE_3"/>
    <property type="match status" value="1"/>
</dbReference>
<organism>
    <name type="scientific">Legionella pneumophila (strain Paris)</name>
    <dbReference type="NCBI Taxonomy" id="297246"/>
    <lineage>
        <taxon>Bacteria</taxon>
        <taxon>Pseudomonadati</taxon>
        <taxon>Pseudomonadota</taxon>
        <taxon>Gammaproteobacteria</taxon>
        <taxon>Legionellales</taxon>
        <taxon>Legionellaceae</taxon>
        <taxon>Legionella</taxon>
    </lineage>
</organism>
<proteinExistence type="inferred from homology"/>
<keyword id="KW-0963">Cytoplasm</keyword>
<keyword id="KW-0312">Gluconeogenesis</keyword>
<keyword id="KW-0324">Glycolysis</keyword>
<keyword id="KW-0413">Isomerase</keyword>
<protein>
    <recommendedName>
        <fullName evidence="1">Glucose-6-phosphate isomerase</fullName>
        <shortName evidence="1">GPI</shortName>
        <ecNumber evidence="1">5.3.1.9</ecNumber>
    </recommendedName>
    <alternativeName>
        <fullName evidence="1">Phosphoglucose isomerase</fullName>
        <shortName evidence="1">PGI</shortName>
    </alternativeName>
    <alternativeName>
        <fullName evidence="1">Phosphohexose isomerase</fullName>
        <shortName evidence="1">PHI</shortName>
    </alternativeName>
</protein>